<reference key="1">
    <citation type="journal article" date="2007" name="ISME J.">
        <title>Population level functional diversity in a microbial community revealed by comparative genomic and metagenomic analyses.</title>
        <authorList>
            <person name="Bhaya D."/>
            <person name="Grossman A.R."/>
            <person name="Steunou A.-S."/>
            <person name="Khuri N."/>
            <person name="Cohan F.M."/>
            <person name="Hamamura N."/>
            <person name="Melendrez M.C."/>
            <person name="Bateson M.M."/>
            <person name="Ward D.M."/>
            <person name="Heidelberg J.F."/>
        </authorList>
    </citation>
    <scope>NUCLEOTIDE SEQUENCE [LARGE SCALE GENOMIC DNA]</scope>
    <source>
        <strain>JA-2-3B'a(2-13)</strain>
    </source>
</reference>
<organism>
    <name type="scientific">Synechococcus sp. (strain JA-2-3B'a(2-13))</name>
    <name type="common">Cyanobacteria bacterium Yellowstone B-Prime</name>
    <dbReference type="NCBI Taxonomy" id="321332"/>
    <lineage>
        <taxon>Bacteria</taxon>
        <taxon>Bacillati</taxon>
        <taxon>Cyanobacteriota</taxon>
        <taxon>Cyanophyceae</taxon>
        <taxon>Synechococcales</taxon>
        <taxon>Synechococcaceae</taxon>
        <taxon>Synechococcus</taxon>
    </lineage>
</organism>
<comment type="function">
    <text evidence="1">Component of the cytochrome b6-f complex, which mediates electron transfer between photosystem II (PSII) and photosystem I (PSI), cyclic electron flow around PSI, and state transitions.</text>
</comment>
<comment type="catalytic activity">
    <reaction evidence="1">
        <text>2 oxidized [plastocyanin] + a plastoquinol + 2 H(+)(in) = 2 reduced [plastocyanin] + a plastoquinone + 4 H(+)(out)</text>
        <dbReference type="Rhea" id="RHEA:22148"/>
        <dbReference type="Rhea" id="RHEA-COMP:9561"/>
        <dbReference type="Rhea" id="RHEA-COMP:9562"/>
        <dbReference type="Rhea" id="RHEA-COMP:10039"/>
        <dbReference type="Rhea" id="RHEA-COMP:10040"/>
        <dbReference type="ChEBI" id="CHEBI:15378"/>
        <dbReference type="ChEBI" id="CHEBI:17757"/>
        <dbReference type="ChEBI" id="CHEBI:29036"/>
        <dbReference type="ChEBI" id="CHEBI:49552"/>
        <dbReference type="ChEBI" id="CHEBI:62192"/>
        <dbReference type="EC" id="7.1.1.6"/>
    </reaction>
</comment>
<comment type="cofactor">
    <cofactor evidence="1">
        <name>[2Fe-2S] cluster</name>
        <dbReference type="ChEBI" id="CHEBI:190135"/>
    </cofactor>
    <text evidence="1">Binds 1 [2Fe-2S] cluster per subunit.</text>
</comment>
<comment type="subunit">
    <text evidence="1">The 4 large subunits of the cytochrome b6-f complex are cytochrome b6, subunit IV (17 kDa polypeptide, PetD), cytochrome f and the Rieske protein, while the 4 small subunits are PetG, PetL, PetM and PetN. The complex functions as a dimer.</text>
</comment>
<comment type="subcellular location">
    <subcellularLocation>
        <location evidence="1">Cellular thylakoid membrane</location>
        <topology evidence="1">Single-pass membrane protein</topology>
    </subcellularLocation>
    <text evidence="1">The transmembrane helix obliquely spans the membrane in one monomer, and its extrinsic C-terminal domain is part of the other monomer.</text>
</comment>
<comment type="miscellaneous">
    <text>The Rieske iron-sulfur protein is a high potential 2Fe-2S protein.</text>
</comment>
<comment type="similarity">
    <text evidence="1">Belongs to the Rieske iron-sulfur protein family.</text>
</comment>
<protein>
    <recommendedName>
        <fullName evidence="1">Cytochrome b6-f complex iron-sulfur subunit</fullName>
        <ecNumber evidence="1">7.1.1.6</ecNumber>
    </recommendedName>
    <alternativeName>
        <fullName evidence="1">Plastohydroquinone:plastocyanin oxidoreductase iron-sulfur protein</fullName>
        <shortName evidence="1">ISP</shortName>
        <shortName evidence="1">RISP</shortName>
    </alternativeName>
    <alternativeName>
        <fullName evidence="1">Rieske iron-sulfur protein</fullName>
    </alternativeName>
</protein>
<evidence type="ECO:0000255" key="1">
    <source>
        <dbReference type="HAMAP-Rule" id="MF_01335"/>
    </source>
</evidence>
<accession>Q2JL39</accession>
<name>UCRI_SYNJB</name>
<feature type="chain" id="PRO_0000298465" description="Cytochrome b6-f complex iron-sulfur subunit">
    <location>
        <begin position="1"/>
        <end position="172"/>
    </location>
</feature>
<feature type="transmembrane region" description="Helical" evidence="1">
    <location>
        <begin position="19"/>
        <end position="39"/>
    </location>
</feature>
<feature type="domain" description="Rieske" evidence="1">
    <location>
        <begin position="61"/>
        <end position="161"/>
    </location>
</feature>
<feature type="binding site" evidence="1">
    <location>
        <position position="107"/>
    </location>
    <ligand>
        <name>[2Fe-2S] cluster</name>
        <dbReference type="ChEBI" id="CHEBI:190135"/>
    </ligand>
</feature>
<feature type="binding site" evidence="1">
    <location>
        <position position="109"/>
    </location>
    <ligand>
        <name>[2Fe-2S] cluster</name>
        <dbReference type="ChEBI" id="CHEBI:190135"/>
    </ligand>
</feature>
<feature type="binding site" evidence="1">
    <location>
        <position position="125"/>
    </location>
    <ligand>
        <name>[2Fe-2S] cluster</name>
        <dbReference type="ChEBI" id="CHEBI:190135"/>
    </ligand>
</feature>
<feature type="binding site" evidence="1">
    <location>
        <position position="128"/>
    </location>
    <ligand>
        <name>[2Fe-2S] cluster</name>
        <dbReference type="ChEBI" id="CHEBI:190135"/>
    </ligand>
</feature>
<feature type="disulfide bond" evidence="1">
    <location>
        <begin position="112"/>
        <end position="127"/>
    </location>
</feature>
<proteinExistence type="inferred from homology"/>
<sequence>MTEAVSNFEAPPMSRRVLLNALLSGSVGVVVVGALYPVVKYFIPPSAGGGGEGLIAQDALGKPISVSELLATHAATDRVLAQGLKGDPTYIVIDNGAVANYGLNAVCTHLGCVVPWNVGENLFKCPCHGSQYAANGKVIRGPAPRSLELVSATVDGDNVRFSPWQGPDFRET</sequence>
<dbReference type="EC" id="7.1.1.6" evidence="1"/>
<dbReference type="EMBL" id="CP000240">
    <property type="protein sequence ID" value="ABD02583.1"/>
    <property type="molecule type" value="Genomic_DNA"/>
</dbReference>
<dbReference type="RefSeq" id="WP_011433228.1">
    <property type="nucleotide sequence ID" value="NC_007776.1"/>
</dbReference>
<dbReference type="SMR" id="Q2JL39"/>
<dbReference type="STRING" id="321332.CYB_1622"/>
<dbReference type="KEGG" id="cyb:CYB_1622"/>
<dbReference type="eggNOG" id="COG0723">
    <property type="taxonomic scope" value="Bacteria"/>
</dbReference>
<dbReference type="HOGENOM" id="CLU_055690_8_0_3"/>
<dbReference type="OrthoDB" id="9767869at2"/>
<dbReference type="Proteomes" id="UP000001938">
    <property type="component" value="Chromosome"/>
</dbReference>
<dbReference type="GO" id="GO:0031676">
    <property type="term" value="C:plasma membrane-derived thylakoid membrane"/>
    <property type="evidence" value="ECO:0007669"/>
    <property type="project" value="UniProtKB-SubCell"/>
</dbReference>
<dbReference type="GO" id="GO:0051537">
    <property type="term" value="F:2 iron, 2 sulfur cluster binding"/>
    <property type="evidence" value="ECO:0007669"/>
    <property type="project" value="UniProtKB-KW"/>
</dbReference>
<dbReference type="GO" id="GO:0045158">
    <property type="term" value="F:electron transporter, transferring electrons within cytochrome b6/f complex of photosystem II activity"/>
    <property type="evidence" value="ECO:0007669"/>
    <property type="project" value="UniProtKB-UniRule"/>
</dbReference>
<dbReference type="GO" id="GO:0046872">
    <property type="term" value="F:metal ion binding"/>
    <property type="evidence" value="ECO:0007669"/>
    <property type="project" value="UniProtKB-KW"/>
</dbReference>
<dbReference type="GO" id="GO:0004497">
    <property type="term" value="F:monooxygenase activity"/>
    <property type="evidence" value="ECO:0007669"/>
    <property type="project" value="UniProtKB-ARBA"/>
</dbReference>
<dbReference type="GO" id="GO:0016705">
    <property type="term" value="F:oxidoreductase activity, acting on paired donors, with incorporation or reduction of molecular oxygen"/>
    <property type="evidence" value="ECO:0007669"/>
    <property type="project" value="UniProtKB-ARBA"/>
</dbReference>
<dbReference type="GO" id="GO:0009496">
    <property type="term" value="F:plastoquinol--plastocyanin reductase activity"/>
    <property type="evidence" value="ECO:0007669"/>
    <property type="project" value="UniProtKB-UniRule"/>
</dbReference>
<dbReference type="GO" id="GO:0015979">
    <property type="term" value="P:photosynthesis"/>
    <property type="evidence" value="ECO:0007669"/>
    <property type="project" value="UniProtKB-UniRule"/>
</dbReference>
<dbReference type="Gene3D" id="2.102.10.10">
    <property type="entry name" value="Rieske [2Fe-2S] iron-sulphur domain"/>
    <property type="match status" value="1"/>
</dbReference>
<dbReference type="Gene3D" id="1.20.5.700">
    <property type="entry name" value="Single helix bin"/>
    <property type="match status" value="1"/>
</dbReference>
<dbReference type="HAMAP" id="MF_01335">
    <property type="entry name" value="Cytb6_f_Rieske"/>
    <property type="match status" value="1"/>
</dbReference>
<dbReference type="InterPro" id="IPR023960">
    <property type="entry name" value="Cyt_b6_f_Rieske"/>
</dbReference>
<dbReference type="InterPro" id="IPR017941">
    <property type="entry name" value="Rieske_2Fe-2S"/>
</dbReference>
<dbReference type="InterPro" id="IPR036922">
    <property type="entry name" value="Rieske_2Fe-2S_sf"/>
</dbReference>
<dbReference type="InterPro" id="IPR014349">
    <property type="entry name" value="Rieske_Fe-S_prot"/>
</dbReference>
<dbReference type="InterPro" id="IPR005805">
    <property type="entry name" value="Rieske_Fe-S_prot_C"/>
</dbReference>
<dbReference type="NCBIfam" id="NF010001">
    <property type="entry name" value="PRK13474.1"/>
    <property type="match status" value="1"/>
</dbReference>
<dbReference type="PANTHER" id="PTHR10134">
    <property type="entry name" value="CYTOCHROME B-C1 COMPLEX SUBUNIT RIESKE, MITOCHONDRIAL"/>
    <property type="match status" value="1"/>
</dbReference>
<dbReference type="Pfam" id="PF00355">
    <property type="entry name" value="Rieske"/>
    <property type="match status" value="1"/>
</dbReference>
<dbReference type="Pfam" id="PF25471">
    <property type="entry name" value="TM_PetC"/>
    <property type="match status" value="1"/>
</dbReference>
<dbReference type="PRINTS" id="PR00162">
    <property type="entry name" value="RIESKE"/>
</dbReference>
<dbReference type="SUPFAM" id="SSF50022">
    <property type="entry name" value="ISP domain"/>
    <property type="match status" value="1"/>
</dbReference>
<dbReference type="PROSITE" id="PS51296">
    <property type="entry name" value="RIESKE"/>
    <property type="match status" value="1"/>
</dbReference>
<gene>
    <name evidence="1" type="primary">petC</name>
    <name type="ordered locus">CYB_1622</name>
</gene>
<keyword id="KW-0001">2Fe-2S</keyword>
<keyword id="KW-1015">Disulfide bond</keyword>
<keyword id="KW-0249">Electron transport</keyword>
<keyword id="KW-0408">Iron</keyword>
<keyword id="KW-0411">Iron-sulfur</keyword>
<keyword id="KW-0472">Membrane</keyword>
<keyword id="KW-0479">Metal-binding</keyword>
<keyword id="KW-1185">Reference proteome</keyword>
<keyword id="KW-0793">Thylakoid</keyword>
<keyword id="KW-1278">Translocase</keyword>
<keyword id="KW-0812">Transmembrane</keyword>
<keyword id="KW-1133">Transmembrane helix</keyword>
<keyword id="KW-0813">Transport</keyword>